<feature type="chain" id="PRO_1000078130" description="Shikimate dehydrogenase (NADP(+))">
    <location>
        <begin position="1"/>
        <end position="268"/>
    </location>
</feature>
<feature type="active site" description="Proton acceptor" evidence="1">
    <location>
        <position position="64"/>
    </location>
</feature>
<feature type="binding site" evidence="1">
    <location>
        <begin position="13"/>
        <end position="15"/>
    </location>
    <ligand>
        <name>shikimate</name>
        <dbReference type="ChEBI" id="CHEBI:36208"/>
    </ligand>
</feature>
<feature type="binding site" evidence="1">
    <location>
        <position position="60"/>
    </location>
    <ligand>
        <name>shikimate</name>
        <dbReference type="ChEBI" id="CHEBI:36208"/>
    </ligand>
</feature>
<feature type="binding site" evidence="1">
    <location>
        <position position="76"/>
    </location>
    <ligand>
        <name>NADP(+)</name>
        <dbReference type="ChEBI" id="CHEBI:58349"/>
    </ligand>
</feature>
<feature type="binding site" evidence="1">
    <location>
        <position position="85"/>
    </location>
    <ligand>
        <name>shikimate</name>
        <dbReference type="ChEBI" id="CHEBI:36208"/>
    </ligand>
</feature>
<feature type="binding site" evidence="1">
    <location>
        <position position="100"/>
    </location>
    <ligand>
        <name>shikimate</name>
        <dbReference type="ChEBI" id="CHEBI:36208"/>
    </ligand>
</feature>
<feature type="binding site" evidence="1">
    <location>
        <begin position="124"/>
        <end position="128"/>
    </location>
    <ligand>
        <name>NADP(+)</name>
        <dbReference type="ChEBI" id="CHEBI:58349"/>
    </ligand>
</feature>
<feature type="binding site" evidence="1">
    <location>
        <begin position="148"/>
        <end position="153"/>
    </location>
    <ligand>
        <name>NADP(+)</name>
        <dbReference type="ChEBI" id="CHEBI:58349"/>
    </ligand>
</feature>
<feature type="binding site" evidence="1">
    <location>
        <position position="209"/>
    </location>
    <ligand>
        <name>NADP(+)</name>
        <dbReference type="ChEBI" id="CHEBI:58349"/>
    </ligand>
</feature>
<feature type="binding site" evidence="1">
    <location>
        <position position="211"/>
    </location>
    <ligand>
        <name>shikimate</name>
        <dbReference type="ChEBI" id="CHEBI:36208"/>
    </ligand>
</feature>
<feature type="binding site" evidence="1">
    <location>
        <position position="232"/>
    </location>
    <ligand>
        <name>NADP(+)</name>
        <dbReference type="ChEBI" id="CHEBI:58349"/>
    </ligand>
</feature>
<sequence length="268" mass="29865">MKFAVIGNPISHSLSPVMHRANFNSLGLDDTYEALNIPIEDFHLIKEIISKKELDGFNITIPHKERIIPYLDYVDEQAINAGAVNTVLIKDGKWIGYNTDGIGYVKGLHSVYPDLENAYILILGAGGASKGIAYELAKFVKPKLTVANRTMARFESWNLNINQISLADAEKYLAEFDIVINTTPAGMAGNNESIINLKHLSPNTLMSDIVYIPYKTPILEEAERKGNHIYNGLDMFVYQGAESFKIWTNKDADINSMKTAVLQQLKGE</sequence>
<organism>
    <name type="scientific">Staphylococcus aureus (strain JH9)</name>
    <dbReference type="NCBI Taxonomy" id="359786"/>
    <lineage>
        <taxon>Bacteria</taxon>
        <taxon>Bacillati</taxon>
        <taxon>Bacillota</taxon>
        <taxon>Bacilli</taxon>
        <taxon>Bacillales</taxon>
        <taxon>Staphylococcaceae</taxon>
        <taxon>Staphylococcus</taxon>
    </lineage>
</organism>
<accession>A5ITC3</accession>
<protein>
    <recommendedName>
        <fullName evidence="1">Shikimate dehydrogenase (NADP(+))</fullName>
        <shortName evidence="1">SDH</shortName>
        <ecNumber evidence="1">1.1.1.25</ecNumber>
    </recommendedName>
</protein>
<dbReference type="EC" id="1.1.1.25" evidence="1"/>
<dbReference type="EMBL" id="CP000703">
    <property type="protein sequence ID" value="ABQ49446.1"/>
    <property type="molecule type" value="Genomic_DNA"/>
</dbReference>
<dbReference type="RefSeq" id="WP_000666757.1">
    <property type="nucleotide sequence ID" value="NC_009487.1"/>
</dbReference>
<dbReference type="SMR" id="A5ITC3"/>
<dbReference type="KEGG" id="saj:SaurJH9_1653"/>
<dbReference type="HOGENOM" id="CLU_044063_4_1_9"/>
<dbReference type="UniPathway" id="UPA00053">
    <property type="reaction ID" value="UER00087"/>
</dbReference>
<dbReference type="GO" id="GO:0005829">
    <property type="term" value="C:cytosol"/>
    <property type="evidence" value="ECO:0007669"/>
    <property type="project" value="TreeGrafter"/>
</dbReference>
<dbReference type="GO" id="GO:0050661">
    <property type="term" value="F:NADP binding"/>
    <property type="evidence" value="ECO:0007669"/>
    <property type="project" value="InterPro"/>
</dbReference>
<dbReference type="GO" id="GO:0004764">
    <property type="term" value="F:shikimate 3-dehydrogenase (NADP+) activity"/>
    <property type="evidence" value="ECO:0007669"/>
    <property type="project" value="UniProtKB-UniRule"/>
</dbReference>
<dbReference type="GO" id="GO:0008652">
    <property type="term" value="P:amino acid biosynthetic process"/>
    <property type="evidence" value="ECO:0007669"/>
    <property type="project" value="UniProtKB-KW"/>
</dbReference>
<dbReference type="GO" id="GO:0009073">
    <property type="term" value="P:aromatic amino acid family biosynthetic process"/>
    <property type="evidence" value="ECO:0007669"/>
    <property type="project" value="UniProtKB-KW"/>
</dbReference>
<dbReference type="GO" id="GO:0009423">
    <property type="term" value="P:chorismate biosynthetic process"/>
    <property type="evidence" value="ECO:0007669"/>
    <property type="project" value="UniProtKB-UniRule"/>
</dbReference>
<dbReference type="GO" id="GO:0019632">
    <property type="term" value="P:shikimate metabolic process"/>
    <property type="evidence" value="ECO:0007669"/>
    <property type="project" value="InterPro"/>
</dbReference>
<dbReference type="CDD" id="cd01065">
    <property type="entry name" value="NAD_bind_Shikimate_DH"/>
    <property type="match status" value="1"/>
</dbReference>
<dbReference type="FunFam" id="3.40.50.10860:FF:000016">
    <property type="entry name" value="Shikimate dehydrogenase (NADP(+))"/>
    <property type="match status" value="1"/>
</dbReference>
<dbReference type="FunFam" id="3.40.50.720:FF:000445">
    <property type="entry name" value="Shikimate dehydrogenase (NADP(+))"/>
    <property type="match status" value="1"/>
</dbReference>
<dbReference type="Gene3D" id="3.40.50.10860">
    <property type="entry name" value="Leucine Dehydrogenase, chain A, domain 1"/>
    <property type="match status" value="1"/>
</dbReference>
<dbReference type="Gene3D" id="3.40.50.720">
    <property type="entry name" value="NAD(P)-binding Rossmann-like Domain"/>
    <property type="match status" value="1"/>
</dbReference>
<dbReference type="HAMAP" id="MF_00222">
    <property type="entry name" value="Shikimate_DH_AroE"/>
    <property type="match status" value="1"/>
</dbReference>
<dbReference type="InterPro" id="IPR046346">
    <property type="entry name" value="Aminoacid_DH-like_N_sf"/>
</dbReference>
<dbReference type="InterPro" id="IPR036291">
    <property type="entry name" value="NAD(P)-bd_dom_sf"/>
</dbReference>
<dbReference type="InterPro" id="IPR041121">
    <property type="entry name" value="SDH_C"/>
</dbReference>
<dbReference type="InterPro" id="IPR011342">
    <property type="entry name" value="Shikimate_DH"/>
</dbReference>
<dbReference type="InterPro" id="IPR013708">
    <property type="entry name" value="Shikimate_DH-bd_N"/>
</dbReference>
<dbReference type="InterPro" id="IPR022893">
    <property type="entry name" value="Shikimate_DH_fam"/>
</dbReference>
<dbReference type="InterPro" id="IPR006151">
    <property type="entry name" value="Shikm_DH/Glu-tRNA_Rdtase"/>
</dbReference>
<dbReference type="NCBIfam" id="TIGR00507">
    <property type="entry name" value="aroE"/>
    <property type="match status" value="1"/>
</dbReference>
<dbReference type="PANTHER" id="PTHR21089:SF1">
    <property type="entry name" value="BIFUNCTIONAL 3-DEHYDROQUINATE DEHYDRATASE_SHIKIMATE DEHYDROGENASE, CHLOROPLASTIC"/>
    <property type="match status" value="1"/>
</dbReference>
<dbReference type="PANTHER" id="PTHR21089">
    <property type="entry name" value="SHIKIMATE DEHYDROGENASE"/>
    <property type="match status" value="1"/>
</dbReference>
<dbReference type="Pfam" id="PF18317">
    <property type="entry name" value="SDH_C"/>
    <property type="match status" value="1"/>
</dbReference>
<dbReference type="Pfam" id="PF01488">
    <property type="entry name" value="Shikimate_DH"/>
    <property type="match status" value="1"/>
</dbReference>
<dbReference type="Pfam" id="PF08501">
    <property type="entry name" value="Shikimate_dh_N"/>
    <property type="match status" value="1"/>
</dbReference>
<dbReference type="SUPFAM" id="SSF53223">
    <property type="entry name" value="Aminoacid dehydrogenase-like, N-terminal domain"/>
    <property type="match status" value="1"/>
</dbReference>
<dbReference type="SUPFAM" id="SSF51735">
    <property type="entry name" value="NAD(P)-binding Rossmann-fold domains"/>
    <property type="match status" value="1"/>
</dbReference>
<comment type="function">
    <text evidence="1">Involved in the biosynthesis of the chorismate, which leads to the biosynthesis of aromatic amino acids. Catalyzes the reversible NADPH linked reduction of 3-dehydroshikimate (DHSA) to yield shikimate (SA).</text>
</comment>
<comment type="catalytic activity">
    <reaction evidence="1">
        <text>shikimate + NADP(+) = 3-dehydroshikimate + NADPH + H(+)</text>
        <dbReference type="Rhea" id="RHEA:17737"/>
        <dbReference type="ChEBI" id="CHEBI:15378"/>
        <dbReference type="ChEBI" id="CHEBI:16630"/>
        <dbReference type="ChEBI" id="CHEBI:36208"/>
        <dbReference type="ChEBI" id="CHEBI:57783"/>
        <dbReference type="ChEBI" id="CHEBI:58349"/>
        <dbReference type="EC" id="1.1.1.25"/>
    </reaction>
</comment>
<comment type="pathway">
    <text evidence="1">Metabolic intermediate biosynthesis; chorismate biosynthesis; chorismate from D-erythrose 4-phosphate and phosphoenolpyruvate: step 4/7.</text>
</comment>
<comment type="subunit">
    <text evidence="1">Homodimer.</text>
</comment>
<comment type="similarity">
    <text evidence="1">Belongs to the shikimate dehydrogenase family.</text>
</comment>
<evidence type="ECO:0000255" key="1">
    <source>
        <dbReference type="HAMAP-Rule" id="MF_00222"/>
    </source>
</evidence>
<gene>
    <name evidence="1" type="primary">aroE</name>
    <name type="ordered locus">SaurJH9_1653</name>
</gene>
<name>AROE_STAA9</name>
<reference key="1">
    <citation type="submission" date="2007-05" db="EMBL/GenBank/DDBJ databases">
        <title>Complete sequence of chromosome of Staphylococcus aureus subsp. aureus JH9.</title>
        <authorList>
            <consortium name="US DOE Joint Genome Institute"/>
            <person name="Copeland A."/>
            <person name="Lucas S."/>
            <person name="Lapidus A."/>
            <person name="Barry K."/>
            <person name="Detter J.C."/>
            <person name="Glavina del Rio T."/>
            <person name="Hammon N."/>
            <person name="Israni S."/>
            <person name="Pitluck S."/>
            <person name="Chain P."/>
            <person name="Malfatti S."/>
            <person name="Shin M."/>
            <person name="Vergez L."/>
            <person name="Schmutz J."/>
            <person name="Larimer F."/>
            <person name="Land M."/>
            <person name="Hauser L."/>
            <person name="Kyrpides N."/>
            <person name="Kim E."/>
            <person name="Tomasz A."/>
            <person name="Richardson P."/>
        </authorList>
    </citation>
    <scope>NUCLEOTIDE SEQUENCE [LARGE SCALE GENOMIC DNA]</scope>
    <source>
        <strain>JH9</strain>
    </source>
</reference>
<proteinExistence type="inferred from homology"/>
<keyword id="KW-0028">Amino-acid biosynthesis</keyword>
<keyword id="KW-0057">Aromatic amino acid biosynthesis</keyword>
<keyword id="KW-0521">NADP</keyword>
<keyword id="KW-0560">Oxidoreductase</keyword>